<proteinExistence type="evidence at protein level"/>
<organism>
    <name type="scientific">Mus musculus</name>
    <name type="common">Mouse</name>
    <dbReference type="NCBI Taxonomy" id="10090"/>
    <lineage>
        <taxon>Eukaryota</taxon>
        <taxon>Metazoa</taxon>
        <taxon>Chordata</taxon>
        <taxon>Craniata</taxon>
        <taxon>Vertebrata</taxon>
        <taxon>Euteleostomi</taxon>
        <taxon>Mammalia</taxon>
        <taxon>Eutheria</taxon>
        <taxon>Euarchontoglires</taxon>
        <taxon>Glires</taxon>
        <taxon>Rodentia</taxon>
        <taxon>Myomorpha</taxon>
        <taxon>Muroidea</taxon>
        <taxon>Muridae</taxon>
        <taxon>Murinae</taxon>
        <taxon>Mus</taxon>
        <taxon>Mus</taxon>
    </lineage>
</organism>
<dbReference type="EC" id="2.5.1.39" evidence="6"/>
<dbReference type="EMBL" id="AK009092">
    <property type="protein sequence ID" value="BAB26064.1"/>
    <property type="status" value="ALT_SEQ"/>
    <property type="molecule type" value="mRNA"/>
</dbReference>
<dbReference type="EMBL" id="AC109196">
    <property type="status" value="NOT_ANNOTATED_CDS"/>
    <property type="molecule type" value="Genomic_DNA"/>
</dbReference>
<dbReference type="EMBL" id="AC161510">
    <property type="status" value="NOT_ANNOTATED_CDS"/>
    <property type="molecule type" value="Genomic_DNA"/>
</dbReference>
<dbReference type="EMBL" id="BC080773">
    <property type="protein sequence ID" value="AAH80773.1"/>
    <property type="molecule type" value="mRNA"/>
</dbReference>
<dbReference type="CCDS" id="CCDS19465.1"/>
<dbReference type="RefSeq" id="NP_082254.2">
    <property type="nucleotide sequence ID" value="NM_027978.2"/>
</dbReference>
<dbReference type="SMR" id="Q66JT7"/>
<dbReference type="FunCoup" id="Q66JT7">
    <property type="interactions" value="1241"/>
</dbReference>
<dbReference type="IntAct" id="Q66JT7">
    <property type="interactions" value="12"/>
</dbReference>
<dbReference type="STRING" id="10090.ENSMUSP00000031262"/>
<dbReference type="PhosphoSitePlus" id="Q66JT7"/>
<dbReference type="PaxDb" id="10090-ENSMUSP00000031262"/>
<dbReference type="ProteomicsDB" id="285249"/>
<dbReference type="Antibodypedia" id="25200">
    <property type="antibodies" value="58 antibodies from 18 providers"/>
</dbReference>
<dbReference type="DNASU" id="71883"/>
<dbReference type="Ensembl" id="ENSMUST00000031262.9">
    <property type="protein sequence ID" value="ENSMUSP00000031262.8"/>
    <property type="gene ID" value="ENSMUSG00000029319.9"/>
</dbReference>
<dbReference type="GeneID" id="71883"/>
<dbReference type="KEGG" id="mmu:71883"/>
<dbReference type="UCSC" id="uc008yhu.2">
    <property type="organism name" value="mouse"/>
</dbReference>
<dbReference type="AGR" id="MGI:1919133"/>
<dbReference type="CTD" id="27235"/>
<dbReference type="MGI" id="MGI:1919133">
    <property type="gene designation" value="Coq2"/>
</dbReference>
<dbReference type="VEuPathDB" id="HostDB:ENSMUSG00000029319"/>
<dbReference type="eggNOG" id="KOG1381">
    <property type="taxonomic scope" value="Eukaryota"/>
</dbReference>
<dbReference type="GeneTree" id="ENSGT00940000153771"/>
<dbReference type="HOGENOM" id="CLU_034879_3_3_1"/>
<dbReference type="InParanoid" id="Q66JT7"/>
<dbReference type="OMA" id="KFEHTIF"/>
<dbReference type="OrthoDB" id="18170at2759"/>
<dbReference type="PhylomeDB" id="Q66JT7"/>
<dbReference type="TreeFam" id="TF105873"/>
<dbReference type="Reactome" id="R-MMU-1268020">
    <property type="pathway name" value="Mitochondrial protein import"/>
</dbReference>
<dbReference type="Reactome" id="R-MMU-2142789">
    <property type="pathway name" value="Ubiquinol biosynthesis"/>
</dbReference>
<dbReference type="UniPathway" id="UPA00232"/>
<dbReference type="BioGRID-ORCS" id="71883">
    <property type="hits" value="21 hits in 78 CRISPR screens"/>
</dbReference>
<dbReference type="ChiTaRS" id="Coq2">
    <property type="organism name" value="mouse"/>
</dbReference>
<dbReference type="PRO" id="PR:Q66JT7"/>
<dbReference type="Proteomes" id="UP000000589">
    <property type="component" value="Chromosome 5"/>
</dbReference>
<dbReference type="RNAct" id="Q66JT7">
    <property type="molecule type" value="protein"/>
</dbReference>
<dbReference type="Bgee" id="ENSMUSG00000029319">
    <property type="expression patterns" value="Expressed in heart left ventricle and 73 other cell types or tissues"/>
</dbReference>
<dbReference type="ExpressionAtlas" id="Q66JT7">
    <property type="expression patterns" value="baseline and differential"/>
</dbReference>
<dbReference type="GO" id="GO:0031314">
    <property type="term" value="C:extrinsic component of mitochondrial inner membrane"/>
    <property type="evidence" value="ECO:0000314"/>
    <property type="project" value="MGI"/>
</dbReference>
<dbReference type="GO" id="GO:0005743">
    <property type="term" value="C:mitochondrial inner membrane"/>
    <property type="evidence" value="ECO:0000250"/>
    <property type="project" value="UniProtKB"/>
</dbReference>
<dbReference type="GO" id="GO:0005739">
    <property type="term" value="C:mitochondrion"/>
    <property type="evidence" value="ECO:0007005"/>
    <property type="project" value="MGI"/>
</dbReference>
<dbReference type="GO" id="GO:0008412">
    <property type="term" value="F:4-hydroxybenzoate polyprenyltransferase activity"/>
    <property type="evidence" value="ECO:0000315"/>
    <property type="project" value="MGI"/>
</dbReference>
<dbReference type="GO" id="GO:0004659">
    <property type="term" value="F:prenyltransferase activity"/>
    <property type="evidence" value="ECO:0000266"/>
    <property type="project" value="MGI"/>
</dbReference>
<dbReference type="GO" id="GO:0006071">
    <property type="term" value="P:glycerol metabolic process"/>
    <property type="evidence" value="ECO:0007669"/>
    <property type="project" value="Ensembl"/>
</dbReference>
<dbReference type="GO" id="GO:0008299">
    <property type="term" value="P:isoprenoid biosynthetic process"/>
    <property type="evidence" value="ECO:0007669"/>
    <property type="project" value="UniProtKB-UniRule"/>
</dbReference>
<dbReference type="GO" id="GO:0006744">
    <property type="term" value="P:ubiquinone biosynthetic process"/>
    <property type="evidence" value="ECO:0000315"/>
    <property type="project" value="MGI"/>
</dbReference>
<dbReference type="CDD" id="cd13959">
    <property type="entry name" value="PT_UbiA_COQ2"/>
    <property type="match status" value="1"/>
</dbReference>
<dbReference type="FunFam" id="1.20.120.1780:FF:000001">
    <property type="entry name" value="4-hydroxybenzoate octaprenyltransferase"/>
    <property type="match status" value="1"/>
</dbReference>
<dbReference type="FunFam" id="1.10.357.140:FF:000003">
    <property type="entry name" value="4-hydroxybenzoate polyprenyltransferase, mitochondrial"/>
    <property type="match status" value="1"/>
</dbReference>
<dbReference type="Gene3D" id="1.10.357.140">
    <property type="entry name" value="UbiA prenyltransferase"/>
    <property type="match status" value="1"/>
</dbReference>
<dbReference type="Gene3D" id="1.20.120.1780">
    <property type="entry name" value="UbiA prenyltransferase"/>
    <property type="match status" value="1"/>
</dbReference>
<dbReference type="HAMAP" id="MF_01635">
    <property type="entry name" value="UbiA"/>
    <property type="match status" value="1"/>
</dbReference>
<dbReference type="InterPro" id="IPR006370">
    <property type="entry name" value="HB_polyprenyltransferase-like"/>
</dbReference>
<dbReference type="InterPro" id="IPR039653">
    <property type="entry name" value="Prenyltransferase"/>
</dbReference>
<dbReference type="InterPro" id="IPR000537">
    <property type="entry name" value="UbiA_prenyltransferase"/>
</dbReference>
<dbReference type="InterPro" id="IPR030470">
    <property type="entry name" value="UbiA_prenylTrfase_CS"/>
</dbReference>
<dbReference type="InterPro" id="IPR044878">
    <property type="entry name" value="UbiA_sf"/>
</dbReference>
<dbReference type="NCBIfam" id="TIGR01474">
    <property type="entry name" value="ubiA_proteo"/>
    <property type="match status" value="1"/>
</dbReference>
<dbReference type="PANTHER" id="PTHR11048:SF28">
    <property type="entry name" value="4-HYDROXYBENZOATE POLYPRENYLTRANSFERASE, MITOCHONDRIAL"/>
    <property type="match status" value="1"/>
</dbReference>
<dbReference type="PANTHER" id="PTHR11048">
    <property type="entry name" value="PRENYLTRANSFERASES"/>
    <property type="match status" value="1"/>
</dbReference>
<dbReference type="Pfam" id="PF01040">
    <property type="entry name" value="UbiA"/>
    <property type="match status" value="1"/>
</dbReference>
<dbReference type="PROSITE" id="PS00943">
    <property type="entry name" value="UBIA"/>
    <property type="match status" value="1"/>
</dbReference>
<feature type="transit peptide" description="Mitochondrion" evidence="3">
    <location>
        <begin position="1"/>
        <end position="34"/>
    </location>
</feature>
<feature type="chain" id="PRO_0000228624" description="4-hydroxybenzoate polyprenyltransferase, mitochondrial" evidence="3">
    <location>
        <begin position="35"/>
        <end position="374"/>
    </location>
</feature>
<feature type="topological domain" description="Mitochondrial matrix" evidence="2">
    <location>
        <begin position="35"/>
        <end position="83"/>
    </location>
</feature>
<feature type="transmembrane region" description="Helical" evidence="3">
    <location>
        <begin position="84"/>
        <end position="104"/>
    </location>
</feature>
<feature type="topological domain" description="Mitochondrial intermembrane" evidence="2">
    <location>
        <begin position="105"/>
        <end position="108"/>
    </location>
</feature>
<feature type="transmembrane region" description="Helical" evidence="3">
    <location>
        <begin position="109"/>
        <end position="129"/>
    </location>
</feature>
<feature type="topological domain" description="Mitochondrial matrix" evidence="2">
    <location>
        <begin position="130"/>
        <end position="148"/>
    </location>
</feature>
<feature type="transmembrane region" description="Helical" evidence="3">
    <location>
        <begin position="149"/>
        <end position="169"/>
    </location>
</feature>
<feature type="topological domain" description="Mitochondrial intermembrane" evidence="2">
    <location>
        <begin position="170"/>
        <end position="172"/>
    </location>
</feature>
<feature type="transmembrane region" description="Helical" evidence="3">
    <location>
        <begin position="173"/>
        <end position="193"/>
    </location>
</feature>
<feature type="topological domain" description="Mitochondrial matrix" evidence="2">
    <location>
        <begin position="194"/>
        <end position="200"/>
    </location>
</feature>
<feature type="transmembrane region" description="Helical" evidence="3">
    <location>
        <begin position="201"/>
        <end position="221"/>
    </location>
</feature>
<feature type="topological domain" description="Mitochondrial intermembrane" evidence="2">
    <location>
        <begin position="222"/>
        <end position="230"/>
    </location>
</feature>
<feature type="transmembrane region" description="Helical" evidence="3">
    <location>
        <begin position="231"/>
        <end position="251"/>
    </location>
</feature>
<feature type="topological domain" description="Mitochondrial matrix" evidence="2">
    <location>
        <begin position="252"/>
        <end position="277"/>
    </location>
</feature>
<feature type="transmembrane region" description="Helical" evidence="3">
    <location>
        <begin position="278"/>
        <end position="298"/>
    </location>
</feature>
<feature type="topological domain" description="Mitochondrial intermembrane" evidence="2">
    <location>
        <begin position="299"/>
        <end position="332"/>
    </location>
</feature>
<feature type="transmembrane region" description="Helical" evidence="3">
    <location>
        <begin position="333"/>
        <end position="353"/>
    </location>
</feature>
<feature type="topological domain" description="Mitochondrial matrix" evidence="2">
    <location>
        <begin position="354"/>
        <end position="374"/>
    </location>
</feature>
<feature type="sequence conflict" description="In Ref. 3; AAH80773." evidence="5" ref="3">
    <original>V</original>
    <variation>M</variation>
    <location>
        <position position="198"/>
    </location>
</feature>
<feature type="sequence conflict" description="In Ref. 3; AAH80773." evidence="5" ref="3">
    <original>N</original>
    <variation>S</variation>
    <location>
        <position position="297"/>
    </location>
</feature>
<protein>
    <recommendedName>
        <fullName evidence="3">4-hydroxybenzoate polyprenyltransferase, mitochondrial</fullName>
        <shortName evidence="3">4-HB polyprenyltransferase</shortName>
        <ecNumber evidence="6">2.5.1.39</ecNumber>
    </recommendedName>
    <alternativeName>
        <fullName evidence="3">Para-hydroxybenzoate--polyprenyltransferase</fullName>
        <shortName evidence="3">PHB:PPT</shortName>
        <shortName evidence="3">PHB:polyprenyltransferase</shortName>
    </alternativeName>
</protein>
<gene>
    <name evidence="3" type="primary">Coq2</name>
</gene>
<keyword id="KW-0414">Isoprene biosynthesis</keyword>
<keyword id="KW-0472">Membrane</keyword>
<keyword id="KW-0496">Mitochondrion</keyword>
<keyword id="KW-0999">Mitochondrion inner membrane</keyword>
<keyword id="KW-1185">Reference proteome</keyword>
<keyword id="KW-0808">Transferase</keyword>
<keyword id="KW-0809">Transit peptide</keyword>
<keyword id="KW-0812">Transmembrane</keyword>
<keyword id="KW-1133">Transmembrane helix</keyword>
<keyword id="KW-0831">Ubiquinone biosynthesis</keyword>
<accession>Q66JT7</accession>
<accession>E9QPH1</accession>
<accession>Q9D7M9</accession>
<comment type="function">
    <text evidence="1 2 4">Mediates the second step in the final reaction sequence of coenzyme Q (CoQ) biosynthesis (PubMed:20526342). Catalyzes the prenylation of para-hydroxybenzoate (PHB) with an all-trans polyprenyl donor (such as all-trans-nonaprenyl diphosphate) (PubMed:20526342). The length of the polyprenyl side chain varies depending on the species, in humans, the side chain is comprised of 10 isoprenyls producing CoQ10 (also known as ubiquinone), whereas rodents predominantly generate CoQ9 (PubMed:20526342). However, this specificity is not complete, human tissues have low amounts of CoQ9 and rodent organs contain some CoQ10 (By similarity). Plays a central role in the biosynthesis of CoQ9 (PubMed:20526342). CoQ9 is a vital molecule that transports electrons from mitochondrial respiratory chain complexes (PubMed:20526342). CoQs also function as cofactors for uncoupling protein and play a role as regulators of the extracellularly-induced ceramide-dependent apoptotic pathway (By similarity). Regulates mitochondrial permeability transition pore (mPTP) opening and ROS production (pivotal events in cell death) in a tissue specific manner (By similarity).</text>
</comment>
<comment type="catalytic activity">
    <reaction evidence="6">
        <text>an all-trans-polyprenyl diphosphate + 4-hydroxybenzoate = a 4-hydroxy-3-(all-trans-polyprenyl)benzoate + diphosphate</text>
        <dbReference type="Rhea" id="RHEA:44504"/>
        <dbReference type="Rhea" id="RHEA-COMP:9514"/>
        <dbReference type="Rhea" id="RHEA-COMP:9564"/>
        <dbReference type="ChEBI" id="CHEBI:17879"/>
        <dbReference type="ChEBI" id="CHEBI:33019"/>
        <dbReference type="ChEBI" id="CHEBI:58914"/>
        <dbReference type="ChEBI" id="CHEBI:78396"/>
        <dbReference type="EC" id="2.5.1.39"/>
    </reaction>
    <physiologicalReaction direction="left-to-right" evidence="6">
        <dbReference type="Rhea" id="RHEA:44505"/>
    </physiologicalReaction>
</comment>
<comment type="catalytic activity">
    <reaction evidence="6">
        <text>all-trans-decaprenyl diphosphate + 4-hydroxybenzoate = 4-hydroxy-3-(all-trans-decaprenyl)benzoate + diphosphate</text>
        <dbReference type="Rhea" id="RHEA:44564"/>
        <dbReference type="ChEBI" id="CHEBI:17879"/>
        <dbReference type="ChEBI" id="CHEBI:33019"/>
        <dbReference type="ChEBI" id="CHEBI:60721"/>
        <dbReference type="ChEBI" id="CHEBI:84503"/>
        <dbReference type="EC" id="2.5.1.39"/>
    </reaction>
    <physiologicalReaction direction="left-to-right" evidence="6">
        <dbReference type="Rhea" id="RHEA:44565"/>
    </physiologicalReaction>
</comment>
<comment type="catalytic activity">
    <reaction evidence="6">
        <text>all-trans-nonaprenyl diphosphate + 4-hydroxybenzoate = 4-hydroxy-3-(all-trans-nonaprenyl)benzoate + diphosphate</text>
        <dbReference type="Rhea" id="RHEA:17709"/>
        <dbReference type="ChEBI" id="CHEBI:17879"/>
        <dbReference type="ChEBI" id="CHEBI:33019"/>
        <dbReference type="ChEBI" id="CHEBI:58391"/>
        <dbReference type="ChEBI" id="CHEBI:84502"/>
        <dbReference type="EC" id="2.5.1.39"/>
    </reaction>
    <physiologicalReaction direction="left-to-right" evidence="6">
        <dbReference type="Rhea" id="RHEA:17710"/>
    </physiologicalReaction>
</comment>
<comment type="cofactor">
    <cofactor evidence="3">
        <name>Mg(2+)</name>
        <dbReference type="ChEBI" id="CHEBI:18420"/>
    </cofactor>
</comment>
<comment type="pathway">
    <text evidence="6">Cofactor biosynthesis; ubiquinone biosynthesis.</text>
</comment>
<comment type="subcellular location">
    <subcellularLocation>
        <location evidence="3">Mitochondrion inner membrane</location>
        <topology evidence="3">Multi-pass membrane protein</topology>
        <orientation evidence="3">Matrix side</orientation>
    </subcellularLocation>
</comment>
<comment type="similarity">
    <text evidence="3">Belongs to the UbiA prenyltransferase family.</text>
</comment>
<comment type="sequence caution" evidence="5">
    <conflict type="erroneous termination">
        <sequence resource="EMBL-CDS" id="BAB26064"/>
    </conflict>
    <text>Truncated C-terminus.</text>
</comment>
<evidence type="ECO:0000250" key="1">
    <source>
        <dbReference type="UniProtKB" id="Q499N4"/>
    </source>
</evidence>
<evidence type="ECO:0000250" key="2">
    <source>
        <dbReference type="UniProtKB" id="Q96H96"/>
    </source>
</evidence>
<evidence type="ECO:0000255" key="3">
    <source>
        <dbReference type="HAMAP-Rule" id="MF_03189"/>
    </source>
</evidence>
<evidence type="ECO:0000269" key="4">
    <source>
    </source>
</evidence>
<evidence type="ECO:0000305" key="5"/>
<evidence type="ECO:0000305" key="6">
    <source>
    </source>
</evidence>
<name>COQ2_MOUSE</name>
<sequence length="374" mass="40504">MLRWGGAGLARGLRAVRSAWLRGPRGLPLALVRSAGVPGARDRRAPAPGTQRGRALSLSAAAVVNSAPRPLQPYLRLMRLDKPIGTWLLYLPCTWSIGLAADPGCFPDWYMLSLFGTGAILMRGAGCTINDMWDRDFDKKVTRTANRPIAAGDISTFQSFVFLGGQLTLALGVLLCLNYYSIAMGAASLLLVVTYPLVKRITFWPQLALGLTFNWGALLGWSAVKGSCDPAVCLPLYFSGVMWTLIYDTIYAHQDKKDDALIGLKSTALLFQENTRQWLSGFGVAMVAALSLAGANNGQTVPYYAAVAAVGAHLAHQIYTVDIHRAEDCWDKFTSNRTVGMLLFLGIVLGNLCKEKTEEAKDAEAVRVGSEQTS</sequence>
<reference key="1">
    <citation type="journal article" date="2005" name="Science">
        <title>The transcriptional landscape of the mammalian genome.</title>
        <authorList>
            <person name="Carninci P."/>
            <person name="Kasukawa T."/>
            <person name="Katayama S."/>
            <person name="Gough J."/>
            <person name="Frith M.C."/>
            <person name="Maeda N."/>
            <person name="Oyama R."/>
            <person name="Ravasi T."/>
            <person name="Lenhard B."/>
            <person name="Wells C."/>
            <person name="Kodzius R."/>
            <person name="Shimokawa K."/>
            <person name="Bajic V.B."/>
            <person name="Brenner S.E."/>
            <person name="Batalov S."/>
            <person name="Forrest A.R."/>
            <person name="Zavolan M."/>
            <person name="Davis M.J."/>
            <person name="Wilming L.G."/>
            <person name="Aidinis V."/>
            <person name="Allen J.E."/>
            <person name="Ambesi-Impiombato A."/>
            <person name="Apweiler R."/>
            <person name="Aturaliya R.N."/>
            <person name="Bailey T.L."/>
            <person name="Bansal M."/>
            <person name="Baxter L."/>
            <person name="Beisel K.W."/>
            <person name="Bersano T."/>
            <person name="Bono H."/>
            <person name="Chalk A.M."/>
            <person name="Chiu K.P."/>
            <person name="Choudhary V."/>
            <person name="Christoffels A."/>
            <person name="Clutterbuck D.R."/>
            <person name="Crowe M.L."/>
            <person name="Dalla E."/>
            <person name="Dalrymple B.P."/>
            <person name="de Bono B."/>
            <person name="Della Gatta G."/>
            <person name="di Bernardo D."/>
            <person name="Down T."/>
            <person name="Engstrom P."/>
            <person name="Fagiolini M."/>
            <person name="Faulkner G."/>
            <person name="Fletcher C.F."/>
            <person name="Fukushima T."/>
            <person name="Furuno M."/>
            <person name="Futaki S."/>
            <person name="Gariboldi M."/>
            <person name="Georgii-Hemming P."/>
            <person name="Gingeras T.R."/>
            <person name="Gojobori T."/>
            <person name="Green R.E."/>
            <person name="Gustincich S."/>
            <person name="Harbers M."/>
            <person name="Hayashi Y."/>
            <person name="Hensch T.K."/>
            <person name="Hirokawa N."/>
            <person name="Hill D."/>
            <person name="Huminiecki L."/>
            <person name="Iacono M."/>
            <person name="Ikeo K."/>
            <person name="Iwama A."/>
            <person name="Ishikawa T."/>
            <person name="Jakt M."/>
            <person name="Kanapin A."/>
            <person name="Katoh M."/>
            <person name="Kawasawa Y."/>
            <person name="Kelso J."/>
            <person name="Kitamura H."/>
            <person name="Kitano H."/>
            <person name="Kollias G."/>
            <person name="Krishnan S.P."/>
            <person name="Kruger A."/>
            <person name="Kummerfeld S.K."/>
            <person name="Kurochkin I.V."/>
            <person name="Lareau L.F."/>
            <person name="Lazarevic D."/>
            <person name="Lipovich L."/>
            <person name="Liu J."/>
            <person name="Liuni S."/>
            <person name="McWilliam S."/>
            <person name="Madan Babu M."/>
            <person name="Madera M."/>
            <person name="Marchionni L."/>
            <person name="Matsuda H."/>
            <person name="Matsuzawa S."/>
            <person name="Miki H."/>
            <person name="Mignone F."/>
            <person name="Miyake S."/>
            <person name="Morris K."/>
            <person name="Mottagui-Tabar S."/>
            <person name="Mulder N."/>
            <person name="Nakano N."/>
            <person name="Nakauchi H."/>
            <person name="Ng P."/>
            <person name="Nilsson R."/>
            <person name="Nishiguchi S."/>
            <person name="Nishikawa S."/>
            <person name="Nori F."/>
            <person name="Ohara O."/>
            <person name="Okazaki Y."/>
            <person name="Orlando V."/>
            <person name="Pang K.C."/>
            <person name="Pavan W.J."/>
            <person name="Pavesi G."/>
            <person name="Pesole G."/>
            <person name="Petrovsky N."/>
            <person name="Piazza S."/>
            <person name="Reed J."/>
            <person name="Reid J.F."/>
            <person name="Ring B.Z."/>
            <person name="Ringwald M."/>
            <person name="Rost B."/>
            <person name="Ruan Y."/>
            <person name="Salzberg S.L."/>
            <person name="Sandelin A."/>
            <person name="Schneider C."/>
            <person name="Schoenbach C."/>
            <person name="Sekiguchi K."/>
            <person name="Semple C.A."/>
            <person name="Seno S."/>
            <person name="Sessa L."/>
            <person name="Sheng Y."/>
            <person name="Shibata Y."/>
            <person name="Shimada H."/>
            <person name="Shimada K."/>
            <person name="Silva D."/>
            <person name="Sinclair B."/>
            <person name="Sperling S."/>
            <person name="Stupka E."/>
            <person name="Sugiura K."/>
            <person name="Sultana R."/>
            <person name="Takenaka Y."/>
            <person name="Taki K."/>
            <person name="Tammoja K."/>
            <person name="Tan S.L."/>
            <person name="Tang S."/>
            <person name="Taylor M.S."/>
            <person name="Tegner J."/>
            <person name="Teichmann S.A."/>
            <person name="Ueda H.R."/>
            <person name="van Nimwegen E."/>
            <person name="Verardo R."/>
            <person name="Wei C.L."/>
            <person name="Yagi K."/>
            <person name="Yamanishi H."/>
            <person name="Zabarovsky E."/>
            <person name="Zhu S."/>
            <person name="Zimmer A."/>
            <person name="Hide W."/>
            <person name="Bult C."/>
            <person name="Grimmond S.M."/>
            <person name="Teasdale R.D."/>
            <person name="Liu E.T."/>
            <person name="Brusic V."/>
            <person name="Quackenbush J."/>
            <person name="Wahlestedt C."/>
            <person name="Mattick J.S."/>
            <person name="Hume D.A."/>
            <person name="Kai C."/>
            <person name="Sasaki D."/>
            <person name="Tomaru Y."/>
            <person name="Fukuda S."/>
            <person name="Kanamori-Katayama M."/>
            <person name="Suzuki M."/>
            <person name="Aoki J."/>
            <person name="Arakawa T."/>
            <person name="Iida J."/>
            <person name="Imamura K."/>
            <person name="Itoh M."/>
            <person name="Kato T."/>
            <person name="Kawaji H."/>
            <person name="Kawagashira N."/>
            <person name="Kawashima T."/>
            <person name="Kojima M."/>
            <person name="Kondo S."/>
            <person name="Konno H."/>
            <person name="Nakano K."/>
            <person name="Ninomiya N."/>
            <person name="Nishio T."/>
            <person name="Okada M."/>
            <person name="Plessy C."/>
            <person name="Shibata K."/>
            <person name="Shiraki T."/>
            <person name="Suzuki S."/>
            <person name="Tagami M."/>
            <person name="Waki K."/>
            <person name="Watahiki A."/>
            <person name="Okamura-Oho Y."/>
            <person name="Suzuki H."/>
            <person name="Kawai J."/>
            <person name="Hayashizaki Y."/>
        </authorList>
    </citation>
    <scope>NUCLEOTIDE SEQUENCE [LARGE SCALE MRNA]</scope>
    <source>
        <strain>C57BL/6J</strain>
        <tissue>Tongue</tissue>
    </source>
</reference>
<reference key="2">
    <citation type="journal article" date="2009" name="PLoS Biol.">
        <title>Lineage-specific biology revealed by a finished genome assembly of the mouse.</title>
        <authorList>
            <person name="Church D.M."/>
            <person name="Goodstadt L."/>
            <person name="Hillier L.W."/>
            <person name="Zody M.C."/>
            <person name="Goldstein S."/>
            <person name="She X."/>
            <person name="Bult C.J."/>
            <person name="Agarwala R."/>
            <person name="Cherry J.L."/>
            <person name="DiCuccio M."/>
            <person name="Hlavina W."/>
            <person name="Kapustin Y."/>
            <person name="Meric P."/>
            <person name="Maglott D."/>
            <person name="Birtle Z."/>
            <person name="Marques A.C."/>
            <person name="Graves T."/>
            <person name="Zhou S."/>
            <person name="Teague B."/>
            <person name="Potamousis K."/>
            <person name="Churas C."/>
            <person name="Place M."/>
            <person name="Herschleb J."/>
            <person name="Runnheim R."/>
            <person name="Forrest D."/>
            <person name="Amos-Landgraf J."/>
            <person name="Schwartz D.C."/>
            <person name="Cheng Z."/>
            <person name="Lindblad-Toh K."/>
            <person name="Eichler E.E."/>
            <person name="Ponting C.P."/>
        </authorList>
    </citation>
    <scope>NUCLEOTIDE SEQUENCE [LARGE SCALE GENOMIC DNA]</scope>
    <source>
        <strain>C57BL/6J</strain>
    </source>
</reference>
<reference key="3">
    <citation type="journal article" date="2004" name="Genome Res.">
        <title>The status, quality, and expansion of the NIH full-length cDNA project: the Mammalian Gene Collection (MGC).</title>
        <authorList>
            <consortium name="The MGC Project Team"/>
        </authorList>
    </citation>
    <scope>NUCLEOTIDE SEQUENCE [LARGE SCALE MRNA]</scope>
    <source>
        <tissue>Jaw</tissue>
        <tissue>Limb</tissue>
    </source>
</reference>
<reference key="4">
    <citation type="journal article" date="2010" name="Nat. Chem. Biol.">
        <title>4-Nitrobenzoate inhibits coenzyme Q biosynthesis in mammalian cell cultures.</title>
        <authorList>
            <person name="Forsman U."/>
            <person name="Sjoeberg M."/>
            <person name="Turunen M."/>
            <person name="Sindelar P.J."/>
        </authorList>
    </citation>
    <scope>FUNCTION</scope>
    <scope>CATALYTIC ACTIVITY</scope>
    <scope>PATHWAY</scope>
</reference>